<organismHost>
    <name type="scientific">Acanthamoeba polyphaga</name>
    <name type="common">Amoeba</name>
    <dbReference type="NCBI Taxonomy" id="5757"/>
</organismHost>
<sequence length="304" mass="35862">MDNINCLFNELLVIIIDFLSDNDKIKFITTCSRLYWFIDKIHYNSVYDYNKISHLSFVDKFKRIRFHAVNAGSIPSIVTDLVLDNNFTDSLKTCNLSKLLRIKLNFHQYKKNRNHILSNVKIDCSNSITISQIRYKTLKPTRLFSLIEPFSLLRPFILSDPYPINRIQIKGYDRDTNYGIPVHTPPEEILEDFGKHLEDIDKLITKNYKKFFPIKKSRPAYIPIVSRNSESSRQSNLNSPNDSVKFNEFNKSNKSTKTNPNNIHNIVTTMNSNKNFHKNKYKYQNRIIPKHSKYPKKFSKNKYH</sequence>
<evidence type="ECO:0000256" key="1">
    <source>
        <dbReference type="SAM" id="MobiDB-lite"/>
    </source>
</evidence>
<keyword id="KW-1185">Reference proteome</keyword>
<reference key="1">
    <citation type="journal article" date="2004" name="Science">
        <title>The 1.2-megabase genome sequence of Mimivirus.</title>
        <authorList>
            <person name="Raoult D."/>
            <person name="Audic S."/>
            <person name="Robert C."/>
            <person name="Abergel C."/>
            <person name="Renesto P."/>
            <person name="Ogata H."/>
            <person name="La Scola B."/>
            <person name="Susan M."/>
            <person name="Claverie J.-M."/>
        </authorList>
    </citation>
    <scope>NUCLEOTIDE SEQUENCE [LARGE SCALE GENOMIC DNA]</scope>
    <source>
        <strain>Rowbotham-Bradford</strain>
    </source>
</reference>
<feature type="chain" id="PRO_0000253228" description="Uncharacterized protein L167">
    <location>
        <begin position="1"/>
        <end position="304"/>
    </location>
</feature>
<feature type="region of interest" description="Disordered" evidence="1">
    <location>
        <begin position="226"/>
        <end position="263"/>
    </location>
</feature>
<feature type="compositionally biased region" description="Polar residues" evidence="1">
    <location>
        <begin position="226"/>
        <end position="244"/>
    </location>
</feature>
<feature type="compositionally biased region" description="Low complexity" evidence="1">
    <location>
        <begin position="246"/>
        <end position="262"/>
    </location>
</feature>
<gene>
    <name type="ordered locus">MIMI_L167</name>
</gene>
<dbReference type="EMBL" id="AY653733">
    <property type="protein sequence ID" value="AAV50441.1"/>
    <property type="molecule type" value="Genomic_DNA"/>
</dbReference>
<dbReference type="KEGG" id="vg:9924767"/>
<dbReference type="Proteomes" id="UP000001134">
    <property type="component" value="Genome"/>
</dbReference>
<name>YL167_MIMIV</name>
<proteinExistence type="predicted"/>
<organism>
    <name type="scientific">Acanthamoeba polyphaga mimivirus</name>
    <name type="common">APMV</name>
    <dbReference type="NCBI Taxonomy" id="212035"/>
    <lineage>
        <taxon>Viruses</taxon>
        <taxon>Varidnaviria</taxon>
        <taxon>Bamfordvirae</taxon>
        <taxon>Nucleocytoviricota</taxon>
        <taxon>Megaviricetes</taxon>
        <taxon>Imitervirales</taxon>
        <taxon>Mimiviridae</taxon>
        <taxon>Megamimivirinae</taxon>
        <taxon>Mimivirus</taxon>
        <taxon>Mimivirus bradfordmassiliense</taxon>
    </lineage>
</organism>
<accession>Q5UPN3</accession>
<protein>
    <recommendedName>
        <fullName>Uncharacterized protein L167</fullName>
    </recommendedName>
</protein>